<organism>
    <name type="scientific">Escherichia phage P1</name>
    <name type="common">Bacteriophage P1</name>
    <dbReference type="NCBI Taxonomy" id="2886926"/>
    <lineage>
        <taxon>Viruses</taxon>
        <taxon>Duplodnaviria</taxon>
        <taxon>Heunggongvirae</taxon>
        <taxon>Uroviricota</taxon>
        <taxon>Caudoviricetes</taxon>
        <taxon>Punavirus</taxon>
        <taxon>Punavirus P1</taxon>
    </lineage>
</organism>
<keyword id="KW-0002">3D-structure</keyword>
<keyword id="KW-1185">Reference proteome</keyword>
<keyword id="KW-0678">Repressor</keyword>
<keyword id="KW-1277">Toxin-antitoxin system</keyword>
<keyword id="KW-0804">Transcription</keyword>
<keyword id="KW-0805">Transcription regulation</keyword>
<gene>
    <name type="primary">phd</name>
</gene>
<proteinExistence type="evidence at protein level"/>
<organismHost>
    <name type="scientific">Enterobacteriaceae</name>
    <dbReference type="NCBI Taxonomy" id="543"/>
</organismHost>
<feature type="chain" id="PRO_0000165279" description="Antitoxin phd">
    <location>
        <begin position="1"/>
        <end position="73"/>
    </location>
</feature>
<feature type="region of interest" description="Sufficient for antitoxin activity, its presence prevents formation of a doc-EF-Tu complex">
    <location>
        <begin position="50"/>
        <end position="73"/>
    </location>
</feature>
<feature type="mutagenesis site" description="Significantly decreases repressor activity, binds DNA less well, inhibits doc normally." evidence="3">
    <original>F</original>
    <variation>A</variation>
    <location>
        <position position="44"/>
    </location>
</feature>
<feature type="mutagenesis site" description="Decreases repressor activity, binds DNA less well, inhibits doc normally." evidence="3">
    <original>Y</original>
    <variation>A</variation>
    <location>
        <position position="47"/>
    </location>
</feature>
<feature type="mutagenesis site" description="Decreases repressor activity, binds DNA less well, inhibits doc normally." evidence="3">
    <original>K</original>
    <variation>M</variation>
    <location>
        <position position="48"/>
    </location>
</feature>
<feature type="strand" evidence="13">
    <location>
        <begin position="2"/>
        <end position="5"/>
    </location>
</feature>
<feature type="helix" evidence="13">
    <location>
        <begin position="6"/>
        <end position="11"/>
    </location>
</feature>
<feature type="helix" evidence="13">
    <location>
        <begin position="13"/>
        <end position="21"/>
    </location>
</feature>
<feature type="strand" evidence="13">
    <location>
        <begin position="26"/>
        <end position="29"/>
    </location>
</feature>
<feature type="strand" evidence="12">
    <location>
        <begin position="31"/>
        <end position="33"/>
    </location>
</feature>
<feature type="strand" evidence="13">
    <location>
        <begin position="36"/>
        <end position="40"/>
    </location>
</feature>
<feature type="helix" evidence="12">
    <location>
        <begin position="41"/>
        <end position="49"/>
    </location>
</feature>
<feature type="turn" evidence="12">
    <location>
        <begin position="50"/>
        <end position="53"/>
    </location>
</feature>
<feature type="helix" evidence="11">
    <location>
        <begin position="55"/>
        <end position="62"/>
    </location>
</feature>
<feature type="helix" evidence="11">
    <location>
        <begin position="64"/>
        <end position="70"/>
    </location>
</feature>
<protein>
    <recommendedName>
        <fullName>Antitoxin phd</fullName>
    </recommendedName>
    <alternativeName>
        <fullName>Addiction protein pdh</fullName>
    </alternativeName>
    <alternativeName>
        <fullName>Prevent host death protein</fullName>
    </alternativeName>
</protein>
<comment type="function">
    <text evidence="1 2 5 7">Antitoxin component of a type II toxin-antitoxin (TA) system (PubMed:18398006, PubMed:18757857, PubMed:24141193). A labile antitoxin that binds to cognate doc toxin and neutralizes its ability to phosphorylate host EF-Tu. Does not reverse phosphorylation. Bacteriophage P1 lysogenizes bacteria as a low-copy number plasmid; phd and doc proteins function in unison to stabilize plasmid number by inducing a lethal response to P1 plasmid prophage loss (PubMed:8411153).</text>
</comment>
<comment type="function">
    <text evidence="3 8">Binds to its own promoter repressing its expression; toxin doc acts as a corepressor or derepressor depending on the ratio, repressing or inducing expression.</text>
</comment>
<comment type="subunit">
    <text evidence="1 2 4 8">Homodimer. Interacts with cognate toxin doc, the exact ratio of doc:phd varies from 1:1 to 1:3. Interaction with doc prevents both kinase activity and dephosphorylation of EF-Tu.</text>
</comment>
<comment type="interaction">
    <interactant intactId="EBI-2908787">
        <id>Q06253</id>
    </interactant>
    <interactant intactId="EBI-2908816">
        <id>Q06259</id>
        <label>doc</label>
    </interactant>
    <organismsDiffer>false</organismsDiffer>
    <experiments>4</experiments>
</comment>
<comment type="PTM">
    <text evidence="6">Degraded by the ClpXP protease.</text>
</comment>
<comment type="miscellaneous">
    <text evidence="10">The concentration of phd in P1 lysogens is far greater than that of the toxin it antagonizes. Such an excess may assure the well-being of carriers of the addicting plasmid.</text>
</comment>
<comment type="similarity">
    <text evidence="9">Belongs to the phD/YefM antitoxin family.</text>
</comment>
<sequence>MQSINFRTARGNLSEVLNNVEAGEEVEITRRGREPAVIVSKATFEAYKKAALDAEFASLFDTLDSTNKELVNR</sequence>
<evidence type="ECO:0000269" key="1">
    <source>
    </source>
</evidence>
<evidence type="ECO:0000269" key="2">
    <source>
    </source>
</evidence>
<evidence type="ECO:0000269" key="3">
    <source>
    </source>
</evidence>
<evidence type="ECO:0000269" key="4">
    <source>
    </source>
</evidence>
<evidence type="ECO:0000269" key="5">
    <source>
    </source>
</evidence>
<evidence type="ECO:0000269" key="6">
    <source>
    </source>
</evidence>
<evidence type="ECO:0000269" key="7">
    <source>
    </source>
</evidence>
<evidence type="ECO:0000269" key="8">
    <source>
    </source>
</evidence>
<evidence type="ECO:0000305" key="9"/>
<evidence type="ECO:0000305" key="10">
    <source>
    </source>
</evidence>
<evidence type="ECO:0007829" key="11">
    <source>
        <dbReference type="PDB" id="3DD7"/>
    </source>
</evidence>
<evidence type="ECO:0007829" key="12">
    <source>
        <dbReference type="PDB" id="3HRY"/>
    </source>
</evidence>
<evidence type="ECO:0007829" key="13">
    <source>
        <dbReference type="PDB" id="3HS2"/>
    </source>
</evidence>
<name>PHD_BPP1</name>
<accession>Q06253</accession>
<dbReference type="EMBL" id="M95666">
    <property type="protein sequence ID" value="AAA16932.1"/>
    <property type="molecule type" value="Unassigned_DNA"/>
</dbReference>
<dbReference type="EMBL" id="AF234172">
    <property type="protein sequence ID" value="AAQ14074.1"/>
    <property type="molecule type" value="Genomic_DNA"/>
</dbReference>
<dbReference type="PIR" id="S40015">
    <property type="entry name" value="S40015"/>
</dbReference>
<dbReference type="RefSeq" id="YP_006570.1">
    <property type="nucleotide sequence ID" value="NC_005856.1"/>
</dbReference>
<dbReference type="PDB" id="3DD7">
    <property type="method" value="X-ray"/>
    <property type="resolution" value="1.70 A"/>
    <property type="chains" value="B/D=51-73"/>
</dbReference>
<dbReference type="PDB" id="3HRY">
    <property type="method" value="X-ray"/>
    <property type="resolution" value="2.25 A"/>
    <property type="chains" value="A/B/C=1-73"/>
</dbReference>
<dbReference type="PDB" id="3HS2">
    <property type="method" value="X-ray"/>
    <property type="resolution" value="2.20 A"/>
    <property type="chains" value="A/B/C/D/E/F/G/H=1-58"/>
</dbReference>
<dbReference type="PDB" id="3K33">
    <property type="method" value="X-ray"/>
    <property type="resolution" value="2.40 A"/>
    <property type="chains" value="B/C/D=1-73"/>
</dbReference>
<dbReference type="PDB" id="3KH2">
    <property type="method" value="X-ray"/>
    <property type="resolution" value="2.71 A"/>
    <property type="chains" value="E/F/G/H=1-73"/>
</dbReference>
<dbReference type="PDB" id="4ZLX">
    <property type="method" value="X-ray"/>
    <property type="resolution" value="2.31 A"/>
    <property type="chains" value="A/B=1-45"/>
</dbReference>
<dbReference type="PDB" id="4ZM0">
    <property type="method" value="X-ray"/>
    <property type="resolution" value="3.17 A"/>
    <property type="chains" value="A/B/C/D=1-73"/>
</dbReference>
<dbReference type="PDB" id="4ZM2">
    <property type="method" value="X-ray"/>
    <property type="resolution" value="3.88 A"/>
    <property type="chains" value="A/B/C/D=1-73"/>
</dbReference>
<dbReference type="PDBsum" id="3DD7"/>
<dbReference type="PDBsum" id="3HRY"/>
<dbReference type="PDBsum" id="3HS2"/>
<dbReference type="PDBsum" id="3K33"/>
<dbReference type="PDBsum" id="3KH2"/>
<dbReference type="PDBsum" id="4ZLX"/>
<dbReference type="PDBsum" id="4ZM0"/>
<dbReference type="PDBsum" id="4ZM2"/>
<dbReference type="SMR" id="Q06253"/>
<dbReference type="DIP" id="DIP-62083N"/>
<dbReference type="IntAct" id="Q06253">
    <property type="interactions" value="1"/>
</dbReference>
<dbReference type="GeneID" id="2777473"/>
<dbReference type="KEGG" id="vg:2777473"/>
<dbReference type="EvolutionaryTrace" id="Q06253"/>
<dbReference type="Proteomes" id="UP000008091">
    <property type="component" value="Genome"/>
</dbReference>
<dbReference type="GO" id="GO:0032993">
    <property type="term" value="C:protein-DNA complex"/>
    <property type="evidence" value="ECO:0000314"/>
    <property type="project" value="CAFA"/>
</dbReference>
<dbReference type="GO" id="GO:0003677">
    <property type="term" value="F:DNA binding"/>
    <property type="evidence" value="ECO:0000314"/>
    <property type="project" value="DisProt"/>
</dbReference>
<dbReference type="GO" id="GO:0001217">
    <property type="term" value="F:DNA-binding transcription repressor activity"/>
    <property type="evidence" value="ECO:0000269"/>
    <property type="project" value="DisProt"/>
</dbReference>
<dbReference type="GO" id="GO:0042803">
    <property type="term" value="F:protein homodimerization activity"/>
    <property type="evidence" value="ECO:0000314"/>
    <property type="project" value="CAFA"/>
</dbReference>
<dbReference type="GO" id="GO:0043565">
    <property type="term" value="F:sequence-specific DNA binding"/>
    <property type="evidence" value="ECO:0000314"/>
    <property type="project" value="CAFA"/>
</dbReference>
<dbReference type="GO" id="GO:0097351">
    <property type="term" value="F:toxin sequestering activity"/>
    <property type="evidence" value="ECO:0000269"/>
    <property type="project" value="DisProt"/>
</dbReference>
<dbReference type="GO" id="GO:0045892">
    <property type="term" value="P:negative regulation of DNA-templated transcription"/>
    <property type="evidence" value="ECO:0000270"/>
    <property type="project" value="DisProt"/>
</dbReference>
<dbReference type="DisProt" id="DP00288"/>
<dbReference type="Gene3D" id="3.40.1620.10">
    <property type="entry name" value="YefM-like domain"/>
    <property type="match status" value="1"/>
</dbReference>
<dbReference type="InterPro" id="IPR006442">
    <property type="entry name" value="Antitoxin_Phd/YefM"/>
</dbReference>
<dbReference type="InterPro" id="IPR036165">
    <property type="entry name" value="YefM-like_sf"/>
</dbReference>
<dbReference type="NCBIfam" id="TIGR01552">
    <property type="entry name" value="phd_fam"/>
    <property type="match status" value="1"/>
</dbReference>
<dbReference type="Pfam" id="PF02604">
    <property type="entry name" value="PhdYeFM_antitox"/>
    <property type="match status" value="1"/>
</dbReference>
<dbReference type="SUPFAM" id="SSF143120">
    <property type="entry name" value="YefM-like"/>
    <property type="match status" value="1"/>
</dbReference>
<reference key="1">
    <citation type="journal article" date="1993" name="J. Mol. Biol.">
        <title>Plasmid addiction genes of bacteriophage P1: doc, which causes cell death on curing of prophage, and phd, which prevents host death when prophage is retained.</title>
        <authorList>
            <person name="Lehnherr H."/>
            <person name="Maguin E."/>
            <person name="Jafri S."/>
            <person name="Yarmolinsky M.B."/>
        </authorList>
    </citation>
    <scope>NUCLEOTIDE SEQUENCE</scope>
</reference>
<reference key="2">
    <citation type="journal article" date="2004" name="J. Bacteriol.">
        <title>Genome of bacteriophage P1.</title>
        <authorList>
            <person name="Lobocka M.B."/>
            <person name="Rose D.J."/>
            <person name="Plunkett G. III"/>
            <person name="Rusin M."/>
            <person name="Samojedny A."/>
            <person name="Lehnherr H."/>
            <person name="Yarmolinsky M.B."/>
            <person name="Blattner F.R."/>
        </authorList>
    </citation>
    <scope>NUCLEOTIDE SEQUENCE [LARGE SCALE GENOMIC DNA]</scope>
</reference>
<reference key="3">
    <citation type="journal article" date="1995" name="Proc. Natl. Acad. Sci. U.S.A.">
        <title>Addiction protein Phd of plasmid prophage P1 is a substrate of the ClpXP serine protease of Escherichia coli.</title>
        <authorList>
            <person name="Lehnherr H."/>
            <person name="Yarmolinsky M.B."/>
        </authorList>
    </citation>
    <scope>CLEAVAGE BY THE CLPXP PROTEASE</scope>
</reference>
<reference key="4">
    <citation type="journal article" date="1998" name="J. Bacteriol.">
        <title>Corepression of the P1 addiction operon by Phd and Doc.</title>
        <authorList>
            <person name="Magnuson R."/>
            <person name="Yarmolinsky M.B."/>
        </authorList>
    </citation>
    <scope>FUNCTION AS A TRANSCRIPTION REGULATOR</scope>
    <scope>DNA-BINDING</scope>
    <scope>SUBUNIT</scope>
</reference>
<reference key="5">
    <citation type="journal article" date="2008" name="Proc. Natl. Acad. Sci. U.S.A.">
        <title>Bacterial addiction module toxin Doc inhibits translation elongation through its association with the 30S ribosomal subunit.</title>
        <authorList>
            <person name="Liu M."/>
            <person name="Zhang Y."/>
            <person name="Inouye M."/>
            <person name="Woychik N.A."/>
        </authorList>
    </citation>
    <scope>FUNCTION AS AN ANTITOXIN</scope>
    <scope>SUBUNIT</scope>
</reference>
<reference key="6">
    <citation type="journal article" date="2013" name="Nat. Chem. Biol.">
        <title>The Fic protein Doc uses an inverted substrate to phosphorylate and inactivate EF-Tu.</title>
        <authorList>
            <person name="Castro-Roa D."/>
            <person name="Garcia-Pino A."/>
            <person name="De Gieter S."/>
            <person name="van Nuland N.A."/>
            <person name="Loris R."/>
            <person name="Zenkin N."/>
        </authorList>
    </citation>
    <scope>FUNCTION AS ANTITOXIN</scope>
    <scope>DOMAIN</scope>
</reference>
<reference key="7">
    <citation type="journal article" date="2008" name="J. Biol. Chem.">
        <title>Doc of prophage P1 is inhibited by its antitoxin partner Phd through fold complementation.</title>
        <authorList>
            <person name="Garcia-Pino A."/>
            <person name="Christensen-Dalsgaard M."/>
            <person name="Wyns L."/>
            <person name="Yarmolinsky M."/>
            <person name="Magnuson R.D."/>
            <person name="Gerdes K."/>
            <person name="Loris R."/>
        </authorList>
    </citation>
    <scope>X-RAY CRYSTALLOGRAPHY (1.7 ANGSTROMS) OF 51-73 IN COMPLEX WITH TOXIN DOC</scope>
</reference>
<reference key="8">
    <citation type="journal article" date="2010" name="Cell">
        <title>Allostery and intrinsic disorder mediate transcription regulation by conditional cooperativity.</title>
        <authorList>
            <person name="Garcia-Pino A."/>
            <person name="Balasubramanian S."/>
            <person name="Wyns L."/>
            <person name="Gazit E."/>
            <person name="De Greve H."/>
            <person name="Magnuson R.D."/>
            <person name="Charlier D."/>
            <person name="van Nuland N.A."/>
            <person name="Loris R."/>
        </authorList>
    </citation>
    <scope>X-RAY CRYSTALLOGRAPHY (2.4 ANGSTROMS)</scope>
    <scope>MODE OF TRANSCRIPTION REGULATION</scope>
    <scope>MUTAGENESIS OF PHE-44; TYR-47 AND LYS-48</scope>
</reference>
<reference key="9">
    <citation type="journal article" date="2010" name="Structure">
        <title>Crystal structures of Phd-Doc, HigA, and YeeU establish multiple evolutionary links between microbial growth-regulating toxin-antitoxin systems.</title>
        <authorList>
            <person name="Arbing M.A."/>
            <person name="Handelman S.K."/>
            <person name="Kuzin A.P."/>
            <person name="Verdon G."/>
            <person name="Wang C."/>
            <person name="Su M."/>
            <person name="Rothenbacher F.P."/>
            <person name="Abashidze M."/>
            <person name="Liu M."/>
            <person name="Hurley J.M."/>
            <person name="Xiao R."/>
            <person name="Acton T."/>
            <person name="Inouye M."/>
            <person name="Montelione G.T."/>
            <person name="Woychik N.A."/>
            <person name="Hunt J.F."/>
        </authorList>
    </citation>
    <scope>X-RAY CRYSTALLOGRAPHY (2.71 ANGSTROMS)</scope>
    <scope>SUBUNIT</scope>
</reference>